<protein>
    <recommendedName>
        <fullName evidence="1">Cell division topological specificity factor</fullName>
    </recommendedName>
</protein>
<feature type="chain" id="PRO_1000191294" description="Cell division topological specificity factor">
    <location>
        <begin position="1"/>
        <end position="84"/>
    </location>
</feature>
<organism>
    <name type="scientific">Pseudomonas aeruginosa (strain LESB58)</name>
    <dbReference type="NCBI Taxonomy" id="557722"/>
    <lineage>
        <taxon>Bacteria</taxon>
        <taxon>Pseudomonadati</taxon>
        <taxon>Pseudomonadota</taxon>
        <taxon>Gammaproteobacteria</taxon>
        <taxon>Pseudomonadales</taxon>
        <taxon>Pseudomonadaceae</taxon>
        <taxon>Pseudomonas</taxon>
    </lineage>
</organism>
<proteinExistence type="inferred from homology"/>
<keyword id="KW-0131">Cell cycle</keyword>
<keyword id="KW-0132">Cell division</keyword>
<name>MINE_PSEA8</name>
<comment type="function">
    <text evidence="1">Prevents the cell division inhibition by proteins MinC and MinD at internal division sites while permitting inhibition at polar sites. This ensures cell division at the proper site by restricting the formation of a division septum at the midpoint of the long axis of the cell.</text>
</comment>
<comment type="similarity">
    <text evidence="1">Belongs to the MinE family.</text>
</comment>
<reference key="1">
    <citation type="journal article" date="2009" name="Genome Res.">
        <title>Newly introduced genomic prophage islands are critical determinants of in vivo competitiveness in the Liverpool epidemic strain of Pseudomonas aeruginosa.</title>
        <authorList>
            <person name="Winstanley C."/>
            <person name="Langille M.G.I."/>
            <person name="Fothergill J.L."/>
            <person name="Kukavica-Ibrulj I."/>
            <person name="Paradis-Bleau C."/>
            <person name="Sanschagrin F."/>
            <person name="Thomson N.R."/>
            <person name="Winsor G.L."/>
            <person name="Quail M.A."/>
            <person name="Lennard N."/>
            <person name="Bignell A."/>
            <person name="Clarke L."/>
            <person name="Seeger K."/>
            <person name="Saunders D."/>
            <person name="Harris D."/>
            <person name="Parkhill J."/>
            <person name="Hancock R.E.W."/>
            <person name="Brinkman F.S.L."/>
            <person name="Levesque R.C."/>
        </authorList>
    </citation>
    <scope>NUCLEOTIDE SEQUENCE [LARGE SCALE GENOMIC DNA]</scope>
    <source>
        <strain>LESB58</strain>
    </source>
</reference>
<dbReference type="EMBL" id="FM209186">
    <property type="protein sequence ID" value="CAW26550.1"/>
    <property type="molecule type" value="Genomic_DNA"/>
</dbReference>
<dbReference type="RefSeq" id="WP_003091581.1">
    <property type="nucleotide sequence ID" value="NC_011770.1"/>
</dbReference>
<dbReference type="SMR" id="B7V7X4"/>
<dbReference type="GeneID" id="77220234"/>
<dbReference type="KEGG" id="pag:PLES_18221"/>
<dbReference type="HOGENOM" id="CLU_137929_2_1_6"/>
<dbReference type="GO" id="GO:0051301">
    <property type="term" value="P:cell division"/>
    <property type="evidence" value="ECO:0007669"/>
    <property type="project" value="UniProtKB-KW"/>
</dbReference>
<dbReference type="GO" id="GO:0032955">
    <property type="term" value="P:regulation of division septum assembly"/>
    <property type="evidence" value="ECO:0007669"/>
    <property type="project" value="InterPro"/>
</dbReference>
<dbReference type="FunFam" id="3.30.1070.10:FF:000001">
    <property type="entry name" value="Cell division topological specificity factor"/>
    <property type="match status" value="1"/>
</dbReference>
<dbReference type="Gene3D" id="3.30.1070.10">
    <property type="entry name" value="Cell division topological specificity factor MinE"/>
    <property type="match status" value="1"/>
</dbReference>
<dbReference type="HAMAP" id="MF_00262">
    <property type="entry name" value="MinE"/>
    <property type="match status" value="1"/>
</dbReference>
<dbReference type="InterPro" id="IPR005527">
    <property type="entry name" value="MinE"/>
</dbReference>
<dbReference type="InterPro" id="IPR036707">
    <property type="entry name" value="MinE_sf"/>
</dbReference>
<dbReference type="NCBIfam" id="TIGR01215">
    <property type="entry name" value="minE"/>
    <property type="match status" value="1"/>
</dbReference>
<dbReference type="NCBIfam" id="NF001422">
    <property type="entry name" value="PRK00296.1"/>
    <property type="match status" value="1"/>
</dbReference>
<dbReference type="NCBIfam" id="NF010595">
    <property type="entry name" value="PRK13989.1"/>
    <property type="match status" value="1"/>
</dbReference>
<dbReference type="Pfam" id="PF03776">
    <property type="entry name" value="MinE"/>
    <property type="match status" value="1"/>
</dbReference>
<dbReference type="SUPFAM" id="SSF55229">
    <property type="entry name" value="Cell division protein MinE topological specificity domain"/>
    <property type="match status" value="1"/>
</dbReference>
<gene>
    <name evidence="1" type="primary">minE</name>
    <name type="ordered locus">PLES_18221</name>
</gene>
<sequence>MSLLDFFRSRKSQNSASIAKERLQIIVAHERGQRAQPDYLPQLQKDLLEVIRKYVPIDQEQIQVELENQGNCSILELNITLPDR</sequence>
<evidence type="ECO:0000255" key="1">
    <source>
        <dbReference type="HAMAP-Rule" id="MF_00262"/>
    </source>
</evidence>
<accession>B7V7X4</accession>